<dbReference type="EMBL" id="CP000563">
    <property type="protein sequence ID" value="ABN63630.1"/>
    <property type="molecule type" value="Genomic_DNA"/>
</dbReference>
<dbReference type="RefSeq" id="WP_006083595.1">
    <property type="nucleotide sequence ID" value="NC_009052.1"/>
</dbReference>
<dbReference type="SMR" id="A3DA67"/>
<dbReference type="STRING" id="325240.Sbal_4165"/>
<dbReference type="GeneID" id="94726191"/>
<dbReference type="KEGG" id="sbl:Sbal_4165"/>
<dbReference type="HOGENOM" id="CLU_083987_3_3_6"/>
<dbReference type="OrthoDB" id="9805969at2"/>
<dbReference type="Proteomes" id="UP000001557">
    <property type="component" value="Chromosome"/>
</dbReference>
<dbReference type="GO" id="GO:0022625">
    <property type="term" value="C:cytosolic large ribosomal subunit"/>
    <property type="evidence" value="ECO:0007669"/>
    <property type="project" value="TreeGrafter"/>
</dbReference>
<dbReference type="GO" id="GO:0019843">
    <property type="term" value="F:rRNA binding"/>
    <property type="evidence" value="ECO:0007669"/>
    <property type="project" value="UniProtKB-UniRule"/>
</dbReference>
<dbReference type="GO" id="GO:0003735">
    <property type="term" value="F:structural constituent of ribosome"/>
    <property type="evidence" value="ECO:0007669"/>
    <property type="project" value="InterPro"/>
</dbReference>
<dbReference type="GO" id="GO:0006412">
    <property type="term" value="P:translation"/>
    <property type="evidence" value="ECO:0007669"/>
    <property type="project" value="UniProtKB-UniRule"/>
</dbReference>
<dbReference type="CDD" id="cd00336">
    <property type="entry name" value="Ribosomal_L22"/>
    <property type="match status" value="1"/>
</dbReference>
<dbReference type="FunFam" id="3.90.470.10:FF:000001">
    <property type="entry name" value="50S ribosomal protein L22"/>
    <property type="match status" value="1"/>
</dbReference>
<dbReference type="Gene3D" id="3.90.470.10">
    <property type="entry name" value="Ribosomal protein L22/L17"/>
    <property type="match status" value="1"/>
</dbReference>
<dbReference type="HAMAP" id="MF_01331_B">
    <property type="entry name" value="Ribosomal_uL22_B"/>
    <property type="match status" value="1"/>
</dbReference>
<dbReference type="InterPro" id="IPR001063">
    <property type="entry name" value="Ribosomal_uL22"/>
</dbReference>
<dbReference type="InterPro" id="IPR005727">
    <property type="entry name" value="Ribosomal_uL22_bac/chlpt-type"/>
</dbReference>
<dbReference type="InterPro" id="IPR047867">
    <property type="entry name" value="Ribosomal_uL22_bac/org-type"/>
</dbReference>
<dbReference type="InterPro" id="IPR018260">
    <property type="entry name" value="Ribosomal_uL22_CS"/>
</dbReference>
<dbReference type="InterPro" id="IPR036394">
    <property type="entry name" value="Ribosomal_uL22_sf"/>
</dbReference>
<dbReference type="NCBIfam" id="TIGR01044">
    <property type="entry name" value="rplV_bact"/>
    <property type="match status" value="1"/>
</dbReference>
<dbReference type="PANTHER" id="PTHR13501">
    <property type="entry name" value="CHLOROPLAST 50S RIBOSOMAL PROTEIN L22-RELATED"/>
    <property type="match status" value="1"/>
</dbReference>
<dbReference type="PANTHER" id="PTHR13501:SF8">
    <property type="entry name" value="LARGE RIBOSOMAL SUBUNIT PROTEIN UL22M"/>
    <property type="match status" value="1"/>
</dbReference>
<dbReference type="Pfam" id="PF00237">
    <property type="entry name" value="Ribosomal_L22"/>
    <property type="match status" value="1"/>
</dbReference>
<dbReference type="SUPFAM" id="SSF54843">
    <property type="entry name" value="Ribosomal protein L22"/>
    <property type="match status" value="1"/>
</dbReference>
<dbReference type="PROSITE" id="PS00464">
    <property type="entry name" value="RIBOSOMAL_L22"/>
    <property type="match status" value="1"/>
</dbReference>
<gene>
    <name evidence="1" type="primary">rplV</name>
    <name type="ordered locus">Sbal_4165</name>
</gene>
<keyword id="KW-1185">Reference proteome</keyword>
<keyword id="KW-0687">Ribonucleoprotein</keyword>
<keyword id="KW-0689">Ribosomal protein</keyword>
<keyword id="KW-0694">RNA-binding</keyword>
<keyword id="KW-0699">rRNA-binding</keyword>
<protein>
    <recommendedName>
        <fullName evidence="1">Large ribosomal subunit protein uL22</fullName>
    </recommendedName>
    <alternativeName>
        <fullName evidence="2">50S ribosomal protein L22</fullName>
    </alternativeName>
</protein>
<proteinExistence type="inferred from homology"/>
<evidence type="ECO:0000255" key="1">
    <source>
        <dbReference type="HAMAP-Rule" id="MF_01331"/>
    </source>
</evidence>
<evidence type="ECO:0000305" key="2"/>
<accession>A3DA67</accession>
<name>RL22_SHEB5</name>
<sequence>MEVLAKHRFARTSAQKARLVADQIRGLPVAKALEILTFSPKKAAVLVKKVLDSAIANAEHNEGADIDELKVGAVFVDEGPTMKRIMPRAKGRADRIMKRTSHITVVVSDR</sequence>
<reference key="1">
    <citation type="submission" date="2007-02" db="EMBL/GenBank/DDBJ databases">
        <title>Complete sequence of chromosome of Shewanella baltica OS155.</title>
        <authorList>
            <consortium name="US DOE Joint Genome Institute"/>
            <person name="Copeland A."/>
            <person name="Lucas S."/>
            <person name="Lapidus A."/>
            <person name="Barry K."/>
            <person name="Detter J.C."/>
            <person name="Glavina del Rio T."/>
            <person name="Hammon N."/>
            <person name="Israni S."/>
            <person name="Dalin E."/>
            <person name="Tice H."/>
            <person name="Pitluck S."/>
            <person name="Sims D.R."/>
            <person name="Brettin T."/>
            <person name="Bruce D."/>
            <person name="Han C."/>
            <person name="Tapia R."/>
            <person name="Brainard J."/>
            <person name="Schmutz J."/>
            <person name="Larimer F."/>
            <person name="Land M."/>
            <person name="Hauser L."/>
            <person name="Kyrpides N."/>
            <person name="Mikhailova N."/>
            <person name="Brettar I."/>
            <person name="Klappenbach J."/>
            <person name="Konstantinidis K."/>
            <person name="Rodrigues J."/>
            <person name="Tiedje J."/>
            <person name="Richardson P."/>
        </authorList>
    </citation>
    <scope>NUCLEOTIDE SEQUENCE [LARGE SCALE GENOMIC DNA]</scope>
    <source>
        <strain>OS155 / ATCC BAA-1091</strain>
    </source>
</reference>
<organism>
    <name type="scientific">Shewanella baltica (strain OS155 / ATCC BAA-1091)</name>
    <dbReference type="NCBI Taxonomy" id="325240"/>
    <lineage>
        <taxon>Bacteria</taxon>
        <taxon>Pseudomonadati</taxon>
        <taxon>Pseudomonadota</taxon>
        <taxon>Gammaproteobacteria</taxon>
        <taxon>Alteromonadales</taxon>
        <taxon>Shewanellaceae</taxon>
        <taxon>Shewanella</taxon>
    </lineage>
</organism>
<comment type="function">
    <text evidence="1">This protein binds specifically to 23S rRNA; its binding is stimulated by other ribosomal proteins, e.g. L4, L17, and L20. It is important during the early stages of 50S assembly. It makes multiple contacts with different domains of the 23S rRNA in the assembled 50S subunit and ribosome (By similarity).</text>
</comment>
<comment type="function">
    <text evidence="1">The globular domain of the protein is located near the polypeptide exit tunnel on the outside of the subunit, while an extended beta-hairpin is found that lines the wall of the exit tunnel in the center of the 70S ribosome.</text>
</comment>
<comment type="subunit">
    <text evidence="1">Part of the 50S ribosomal subunit.</text>
</comment>
<comment type="similarity">
    <text evidence="1">Belongs to the universal ribosomal protein uL22 family.</text>
</comment>
<feature type="chain" id="PRO_1000052643" description="Large ribosomal subunit protein uL22">
    <location>
        <begin position="1"/>
        <end position="110"/>
    </location>
</feature>